<evidence type="ECO:0000250" key="1">
    <source>
        <dbReference type="UniProtKB" id="Q02892"/>
    </source>
</evidence>
<evidence type="ECO:0000255" key="2">
    <source>
        <dbReference type="PROSITE-ProRule" id="PRU01047"/>
    </source>
</evidence>
<evidence type="ECO:0000256" key="3">
    <source>
        <dbReference type="SAM" id="MobiDB-lite"/>
    </source>
</evidence>
<evidence type="ECO:0000269" key="4">
    <source>
    </source>
</evidence>
<evidence type="ECO:0000269" key="5">
    <source>
    </source>
</evidence>
<evidence type="ECO:0000269" key="6">
    <source>
    </source>
</evidence>
<evidence type="ECO:0000303" key="7">
    <source>
    </source>
</evidence>
<evidence type="ECO:0000312" key="8">
    <source>
        <dbReference type="FlyBase" id="FBgn0028473"/>
    </source>
</evidence>
<reference key="1">
    <citation type="journal article" date="2000" name="Science">
        <title>The genome sequence of Drosophila melanogaster.</title>
        <authorList>
            <person name="Adams M.D."/>
            <person name="Celniker S.E."/>
            <person name="Holt R.A."/>
            <person name="Evans C.A."/>
            <person name="Gocayne J.D."/>
            <person name="Amanatides P.G."/>
            <person name="Scherer S.E."/>
            <person name="Li P.W."/>
            <person name="Hoskins R.A."/>
            <person name="Galle R.F."/>
            <person name="George R.A."/>
            <person name="Lewis S.E."/>
            <person name="Richards S."/>
            <person name="Ashburner M."/>
            <person name="Henderson S.N."/>
            <person name="Sutton G.G."/>
            <person name="Wortman J.R."/>
            <person name="Yandell M.D."/>
            <person name="Zhang Q."/>
            <person name="Chen L.X."/>
            <person name="Brandon R.C."/>
            <person name="Rogers Y.-H.C."/>
            <person name="Blazej R.G."/>
            <person name="Champe M."/>
            <person name="Pfeiffer B.D."/>
            <person name="Wan K.H."/>
            <person name="Doyle C."/>
            <person name="Baxter E.G."/>
            <person name="Helt G."/>
            <person name="Nelson C.R."/>
            <person name="Miklos G.L.G."/>
            <person name="Abril J.F."/>
            <person name="Agbayani A."/>
            <person name="An H.-J."/>
            <person name="Andrews-Pfannkoch C."/>
            <person name="Baldwin D."/>
            <person name="Ballew R.M."/>
            <person name="Basu A."/>
            <person name="Baxendale J."/>
            <person name="Bayraktaroglu L."/>
            <person name="Beasley E.M."/>
            <person name="Beeson K.Y."/>
            <person name="Benos P.V."/>
            <person name="Berman B.P."/>
            <person name="Bhandari D."/>
            <person name="Bolshakov S."/>
            <person name="Borkova D."/>
            <person name="Botchan M.R."/>
            <person name="Bouck J."/>
            <person name="Brokstein P."/>
            <person name="Brottier P."/>
            <person name="Burtis K.C."/>
            <person name="Busam D.A."/>
            <person name="Butler H."/>
            <person name="Cadieu E."/>
            <person name="Center A."/>
            <person name="Chandra I."/>
            <person name="Cherry J.M."/>
            <person name="Cawley S."/>
            <person name="Dahlke C."/>
            <person name="Davenport L.B."/>
            <person name="Davies P."/>
            <person name="de Pablos B."/>
            <person name="Delcher A."/>
            <person name="Deng Z."/>
            <person name="Mays A.D."/>
            <person name="Dew I."/>
            <person name="Dietz S.M."/>
            <person name="Dodson K."/>
            <person name="Doup L.E."/>
            <person name="Downes M."/>
            <person name="Dugan-Rocha S."/>
            <person name="Dunkov B.C."/>
            <person name="Dunn P."/>
            <person name="Durbin K.J."/>
            <person name="Evangelista C.C."/>
            <person name="Ferraz C."/>
            <person name="Ferriera S."/>
            <person name="Fleischmann W."/>
            <person name="Fosler C."/>
            <person name="Gabrielian A.E."/>
            <person name="Garg N.S."/>
            <person name="Gelbart W.M."/>
            <person name="Glasser K."/>
            <person name="Glodek A."/>
            <person name="Gong F."/>
            <person name="Gorrell J.H."/>
            <person name="Gu Z."/>
            <person name="Guan P."/>
            <person name="Harris M."/>
            <person name="Harris N.L."/>
            <person name="Harvey D.A."/>
            <person name="Heiman T.J."/>
            <person name="Hernandez J.R."/>
            <person name="Houck J."/>
            <person name="Hostin D."/>
            <person name="Houston K.A."/>
            <person name="Howland T.J."/>
            <person name="Wei M.-H."/>
            <person name="Ibegwam C."/>
            <person name="Jalali M."/>
            <person name="Kalush F."/>
            <person name="Karpen G.H."/>
            <person name="Ke Z."/>
            <person name="Kennison J.A."/>
            <person name="Ketchum K.A."/>
            <person name="Kimmel B.E."/>
            <person name="Kodira C.D."/>
            <person name="Kraft C.L."/>
            <person name="Kravitz S."/>
            <person name="Kulp D."/>
            <person name="Lai Z."/>
            <person name="Lasko P."/>
            <person name="Lei Y."/>
            <person name="Levitsky A.A."/>
            <person name="Li J.H."/>
            <person name="Li Z."/>
            <person name="Liang Y."/>
            <person name="Lin X."/>
            <person name="Liu X."/>
            <person name="Mattei B."/>
            <person name="McIntosh T.C."/>
            <person name="McLeod M.P."/>
            <person name="McPherson D."/>
            <person name="Merkulov G."/>
            <person name="Milshina N.V."/>
            <person name="Mobarry C."/>
            <person name="Morris J."/>
            <person name="Moshrefi A."/>
            <person name="Mount S.M."/>
            <person name="Moy M."/>
            <person name="Murphy B."/>
            <person name="Murphy L."/>
            <person name="Muzny D.M."/>
            <person name="Nelson D.L."/>
            <person name="Nelson D.R."/>
            <person name="Nelson K.A."/>
            <person name="Nixon K."/>
            <person name="Nusskern D.R."/>
            <person name="Pacleb J.M."/>
            <person name="Palazzolo M."/>
            <person name="Pittman G.S."/>
            <person name="Pan S."/>
            <person name="Pollard J."/>
            <person name="Puri V."/>
            <person name="Reese M.G."/>
            <person name="Reinert K."/>
            <person name="Remington K."/>
            <person name="Saunders R.D.C."/>
            <person name="Scheeler F."/>
            <person name="Shen H."/>
            <person name="Shue B.C."/>
            <person name="Siden-Kiamos I."/>
            <person name="Simpson M."/>
            <person name="Skupski M.P."/>
            <person name="Smith T.J."/>
            <person name="Spier E."/>
            <person name="Spradling A.C."/>
            <person name="Stapleton M."/>
            <person name="Strong R."/>
            <person name="Sun E."/>
            <person name="Svirskas R."/>
            <person name="Tector C."/>
            <person name="Turner R."/>
            <person name="Venter E."/>
            <person name="Wang A.H."/>
            <person name="Wang X."/>
            <person name="Wang Z.-Y."/>
            <person name="Wassarman D.A."/>
            <person name="Weinstock G.M."/>
            <person name="Weissenbach J."/>
            <person name="Williams S.M."/>
            <person name="Woodage T."/>
            <person name="Worley K.C."/>
            <person name="Wu D."/>
            <person name="Yang S."/>
            <person name="Yao Q.A."/>
            <person name="Ye J."/>
            <person name="Yeh R.-F."/>
            <person name="Zaveri J.S."/>
            <person name="Zhan M."/>
            <person name="Zhang G."/>
            <person name="Zhao Q."/>
            <person name="Zheng L."/>
            <person name="Zheng X.H."/>
            <person name="Zhong F.N."/>
            <person name="Zhong W."/>
            <person name="Zhou X."/>
            <person name="Zhu S.C."/>
            <person name="Zhu X."/>
            <person name="Smith H.O."/>
            <person name="Gibbs R.A."/>
            <person name="Myers E.W."/>
            <person name="Rubin G.M."/>
            <person name="Venter J.C."/>
        </authorList>
    </citation>
    <scope>NUCLEOTIDE SEQUENCE [LARGE SCALE GENOMIC DNA]</scope>
    <source>
        <strain>Berkeley</strain>
    </source>
</reference>
<reference key="2">
    <citation type="journal article" date="2002" name="Genome Biol.">
        <title>Annotation of the Drosophila melanogaster euchromatic genome: a systematic review.</title>
        <authorList>
            <person name="Misra S."/>
            <person name="Crosby M.A."/>
            <person name="Mungall C.J."/>
            <person name="Matthews B.B."/>
            <person name="Campbell K.S."/>
            <person name="Hradecky P."/>
            <person name="Huang Y."/>
            <person name="Kaminker J.S."/>
            <person name="Millburn G.H."/>
            <person name="Prochnik S.E."/>
            <person name="Smith C.D."/>
            <person name="Tupy J.L."/>
            <person name="Whitfield E.J."/>
            <person name="Bayraktaroglu L."/>
            <person name="Berman B.P."/>
            <person name="Bettencourt B.R."/>
            <person name="Celniker S.E."/>
            <person name="de Grey A.D.N.J."/>
            <person name="Drysdale R.A."/>
            <person name="Harris N.L."/>
            <person name="Richter J."/>
            <person name="Russo S."/>
            <person name="Schroeder A.J."/>
            <person name="Shu S.Q."/>
            <person name="Stapleton M."/>
            <person name="Yamada C."/>
            <person name="Ashburner M."/>
            <person name="Gelbart W.M."/>
            <person name="Rubin G.M."/>
            <person name="Lewis S.E."/>
        </authorList>
    </citation>
    <scope>GENOME REANNOTATION</scope>
    <source>
        <strain>Berkeley</strain>
    </source>
</reference>
<reference key="3">
    <citation type="journal article" date="2002" name="Genome Biol.">
        <title>A Drosophila full-length cDNA resource.</title>
        <authorList>
            <person name="Stapleton M."/>
            <person name="Carlson J.W."/>
            <person name="Brokstein P."/>
            <person name="Yu C."/>
            <person name="Champe M."/>
            <person name="George R.A."/>
            <person name="Guarin H."/>
            <person name="Kronmiller B."/>
            <person name="Pacleb J.M."/>
            <person name="Park S."/>
            <person name="Wan K.H."/>
            <person name="Rubin G.M."/>
            <person name="Celniker S.E."/>
        </authorList>
    </citation>
    <scope>NUCLEOTIDE SEQUENCE [LARGE SCALE MRNA]</scope>
    <source>
        <strain>Berkeley</strain>
        <tissue>Embryo</tissue>
    </source>
</reference>
<reference key="4">
    <citation type="journal article" date="2010" name="Proc. Natl. Acad. Sci. U.S.A.">
        <title>A genome-scale protein interaction profile of Drosophila p53 uncovers additional nodes of the human p53 network.</title>
        <authorList>
            <person name="Lunardi A."/>
            <person name="Di Minin G."/>
            <person name="Provero P."/>
            <person name="Dal Ferro M."/>
            <person name="Carotti M."/>
            <person name="Del Sal G."/>
            <person name="Collavin L."/>
        </authorList>
    </citation>
    <scope>FUNCTION</scope>
</reference>
<reference key="5">
    <citation type="journal article" date="2013" name="Proc. Natl. Acad. Sci. U.S.A.">
        <title>Genes involved in centrosome-independent mitotic spindle assembly in Drosophila S2 cells.</title>
        <authorList>
            <person name="Moutinho-Pereira S."/>
            <person name="Stuurman N."/>
            <person name="Afonso O."/>
            <person name="Hornsveld M."/>
            <person name="Aguiar P."/>
            <person name="Goshima G."/>
            <person name="Vale R.D."/>
            <person name="Maiato H."/>
        </authorList>
    </citation>
    <scope>FUNCTION</scope>
    <scope>SUBCELLULAR LOCATION</scope>
</reference>
<reference key="6">
    <citation type="journal article" date="2022" name="Dev. Cell">
        <title>A translation control module coordinates germline stem cell differentiation with ribosome biogenesis during Drosophila oogenesis.</title>
        <authorList>
            <person name="Martin E.T."/>
            <person name="Blatt P."/>
            <person name="Nguyen E."/>
            <person name="Lahr R."/>
            <person name="Selvam S."/>
            <person name="Yoon H.A.M."/>
            <person name="Pocchiari T."/>
            <person name="Emtenani S."/>
            <person name="Siekhaus D.E."/>
            <person name="Berman A."/>
            <person name="Fuchs G."/>
            <person name="Rangan P."/>
        </authorList>
    </citation>
    <scope>FUNCTION</scope>
</reference>
<feature type="chain" id="PRO_0000195027" description="Nucleolar GTP-binding protein 1">
    <location>
        <begin position="1"/>
        <end position="652"/>
    </location>
</feature>
<feature type="domain" description="OBG-type G" evidence="2">
    <location>
        <begin position="169"/>
        <end position="341"/>
    </location>
</feature>
<feature type="region of interest" description="Disordered" evidence="3">
    <location>
        <begin position="501"/>
        <end position="521"/>
    </location>
</feature>
<feature type="binding site" evidence="2">
    <location>
        <begin position="175"/>
        <end position="182"/>
    </location>
    <ligand>
        <name>GTP</name>
        <dbReference type="ChEBI" id="CHEBI:37565"/>
    </ligand>
</feature>
<feature type="binding site" evidence="2">
    <location>
        <begin position="221"/>
        <end position="225"/>
    </location>
    <ligand>
        <name>GTP</name>
        <dbReference type="ChEBI" id="CHEBI:37565"/>
    </ligand>
</feature>
<feature type="binding site" evidence="2">
    <location>
        <begin position="289"/>
        <end position="292"/>
    </location>
    <ligand>
        <name>GTP</name>
        <dbReference type="ChEBI" id="CHEBI:37565"/>
    </ligand>
</feature>
<proteinExistence type="evidence at transcript level"/>
<sequence>MSLYNFKKIMVVPPAKDFIDIMLSKTQRKTPTVVHKGYKISRIRAFYTRKVKYTQQNFHDRLSQIIQDFPKLDDVHPFYADLMNVLYDKDHYKLALGQLNTARHLVDNVAKDYVRLLKYGDSLYRCKQLKKAALGRMATIMKRQASNLTYLEQVRQHLSRLPTIDPYSRTIIICGFPNVGKSSFINKITRADVEVQPYAFTTKSLYVGHTDYKYLRWQVIDTPGILDHPLEERNVIEMQAITALAHLRACVLYFMDISEQCGHSLEEQVKLFESIKPLFTNKPLILAINKIDILTPEDLPEERRAIITKLQEDKNIPVMLMSTVQETGVMEVKTEACERLLSYRVDQKMRTKKVDNILNRLHVAMPAPRDDKLRAPCIPEKASARLLQNADKAERKRKLEKEIEEEMGDDYTLDLKKNYSEIPEEERYDIIPEFWQGHNIADYIDADIFDKLEELEREEGLREESGVYKVPDMTMDETLKEIREIAKQIRGKRFELRDEKRLSSRKNKPVIPRNKQPKVRDRSVQKLVSTMEGLGVDMSGSENANFTKSVVDLRRGQVAVGSKKVPMQPLLDKESSAVVRKTGQPLKRAPSRDTLGIKNLAIRKKAQIMAKRDIAKKVTSRGLKGEADRFIGTKMPKHLFSGKRGNGKTDRR</sequence>
<protein>
    <recommendedName>
        <fullName>Nucleolar GTP-binding protein 1</fullName>
    </recommendedName>
    <alternativeName>
        <fullName evidence="7">Novel nucleolar protein 1</fullName>
    </alternativeName>
</protein>
<gene>
    <name evidence="8" type="primary">Non1</name>
    <name evidence="8" type="ORF">CG8801</name>
</gene>
<keyword id="KW-0131">Cell cycle</keyword>
<keyword id="KW-0132">Cell division</keyword>
<keyword id="KW-0342">GTP-binding</keyword>
<keyword id="KW-0498">Mitosis</keyword>
<keyword id="KW-0547">Nucleotide-binding</keyword>
<keyword id="KW-0539">Nucleus</keyword>
<keyword id="KW-1185">Reference proteome</keyword>
<keyword id="KW-0690">Ribosome biogenesis</keyword>
<accession>Q9V411</accession>
<dbReference type="EMBL" id="AE013599">
    <property type="protein sequence ID" value="AAF58945.1"/>
    <property type="molecule type" value="Genomic_DNA"/>
</dbReference>
<dbReference type="EMBL" id="AF181654">
    <property type="protein sequence ID" value="AAD55439.1"/>
    <property type="molecule type" value="mRNA"/>
</dbReference>
<dbReference type="RefSeq" id="NP_001286247.1">
    <property type="nucleotide sequence ID" value="NM_001299318.1"/>
</dbReference>
<dbReference type="RefSeq" id="NP_610484.1">
    <property type="nucleotide sequence ID" value="NM_136640.5"/>
</dbReference>
<dbReference type="SMR" id="Q9V411"/>
<dbReference type="BioGRID" id="61797">
    <property type="interactions" value="34"/>
</dbReference>
<dbReference type="DIP" id="DIP-21969N"/>
<dbReference type="FunCoup" id="Q9V411">
    <property type="interactions" value="2490"/>
</dbReference>
<dbReference type="IntAct" id="Q9V411">
    <property type="interactions" value="70"/>
</dbReference>
<dbReference type="STRING" id="7227.FBpp0289874"/>
<dbReference type="PaxDb" id="7227-FBpp0087637"/>
<dbReference type="DNASU" id="35963"/>
<dbReference type="EnsemblMetazoa" id="FBtr0088554">
    <property type="protein sequence ID" value="FBpp0087637"/>
    <property type="gene ID" value="FBgn0028473"/>
</dbReference>
<dbReference type="EnsemblMetazoa" id="FBtr0300649">
    <property type="protein sequence ID" value="FBpp0289874"/>
    <property type="gene ID" value="FBgn0028473"/>
</dbReference>
<dbReference type="GeneID" id="35963"/>
<dbReference type="KEGG" id="dme:Dmel_CG8801"/>
<dbReference type="UCSC" id="CG8801-RA">
    <property type="organism name" value="d. melanogaster"/>
</dbReference>
<dbReference type="AGR" id="FB:FBgn0028473"/>
<dbReference type="CTD" id="35963"/>
<dbReference type="FlyBase" id="FBgn0028473">
    <property type="gene designation" value="Non1"/>
</dbReference>
<dbReference type="VEuPathDB" id="VectorBase:FBgn0028473"/>
<dbReference type="eggNOG" id="KOG1490">
    <property type="taxonomic scope" value="Eukaryota"/>
</dbReference>
<dbReference type="GeneTree" id="ENSGT00390000018475"/>
<dbReference type="HOGENOM" id="CLU_011784_4_1_1"/>
<dbReference type="InParanoid" id="Q9V411"/>
<dbReference type="OMA" id="EWKNDVM"/>
<dbReference type="OrthoDB" id="415015at2759"/>
<dbReference type="PhylomeDB" id="Q9V411"/>
<dbReference type="BioGRID-ORCS" id="35963">
    <property type="hits" value="0 hits in 1 CRISPR screen"/>
</dbReference>
<dbReference type="ChiTaRS" id="Non1">
    <property type="organism name" value="fly"/>
</dbReference>
<dbReference type="GenomeRNAi" id="35963"/>
<dbReference type="PRO" id="PR:Q9V411"/>
<dbReference type="Proteomes" id="UP000000803">
    <property type="component" value="Chromosome 2R"/>
</dbReference>
<dbReference type="Bgee" id="FBgn0028473">
    <property type="expression patterns" value="Expressed in adult enteroendocrine precursor cell in adult midgut (Drosophila) and 268 other cell types or tissues"/>
</dbReference>
<dbReference type="ExpressionAtlas" id="Q9V411">
    <property type="expression patterns" value="baseline and differential"/>
</dbReference>
<dbReference type="GO" id="GO:0005730">
    <property type="term" value="C:nucleolus"/>
    <property type="evidence" value="ECO:0000314"/>
    <property type="project" value="FlyBase"/>
</dbReference>
<dbReference type="GO" id="GO:0005634">
    <property type="term" value="C:nucleus"/>
    <property type="evidence" value="ECO:0007005"/>
    <property type="project" value="FlyBase"/>
</dbReference>
<dbReference type="GO" id="GO:0005525">
    <property type="term" value="F:GTP binding"/>
    <property type="evidence" value="ECO:0007669"/>
    <property type="project" value="UniProtKB-KW"/>
</dbReference>
<dbReference type="GO" id="GO:0003924">
    <property type="term" value="F:GTPase activity"/>
    <property type="evidence" value="ECO:0000250"/>
    <property type="project" value="FlyBase"/>
</dbReference>
<dbReference type="GO" id="GO:0003723">
    <property type="term" value="F:RNA binding"/>
    <property type="evidence" value="ECO:0000318"/>
    <property type="project" value="GO_Central"/>
</dbReference>
<dbReference type="GO" id="GO:0051301">
    <property type="term" value="P:cell division"/>
    <property type="evidence" value="ECO:0007669"/>
    <property type="project" value="UniProtKB-KW"/>
</dbReference>
<dbReference type="GO" id="GO:0042273">
    <property type="term" value="P:ribosomal large subunit biogenesis"/>
    <property type="evidence" value="ECO:0000250"/>
    <property type="project" value="FlyBase"/>
</dbReference>
<dbReference type="CDD" id="cd01897">
    <property type="entry name" value="NOG"/>
    <property type="match status" value="1"/>
</dbReference>
<dbReference type="FunFam" id="1.20.120.1190:FF:000001">
    <property type="entry name" value="Nucleolar GTP-binding protein 1"/>
    <property type="match status" value="1"/>
</dbReference>
<dbReference type="FunFam" id="3.40.50.300:FF:000496">
    <property type="entry name" value="Nucleolar GTP-binding protein 1"/>
    <property type="match status" value="1"/>
</dbReference>
<dbReference type="Gene3D" id="1.20.120.1190">
    <property type="match status" value="1"/>
</dbReference>
<dbReference type="Gene3D" id="3.40.50.300">
    <property type="entry name" value="P-loop containing nucleotide triphosphate hydrolases"/>
    <property type="match status" value="1"/>
</dbReference>
<dbReference type="InterPro" id="IPR031167">
    <property type="entry name" value="G_OBG"/>
</dbReference>
<dbReference type="InterPro" id="IPR006073">
    <property type="entry name" value="GTP-bd"/>
</dbReference>
<dbReference type="InterPro" id="IPR024926">
    <property type="entry name" value="NOG1"/>
</dbReference>
<dbReference type="InterPro" id="IPR041623">
    <property type="entry name" value="NOG1_N"/>
</dbReference>
<dbReference type="InterPro" id="IPR010674">
    <property type="entry name" value="NOG1_Rossman_fold_dom"/>
</dbReference>
<dbReference type="InterPro" id="IPR012973">
    <property type="entry name" value="NOG_C"/>
</dbReference>
<dbReference type="InterPro" id="IPR027417">
    <property type="entry name" value="P-loop_NTPase"/>
</dbReference>
<dbReference type="InterPro" id="IPR005225">
    <property type="entry name" value="Small_GTP-bd"/>
</dbReference>
<dbReference type="NCBIfam" id="TIGR00231">
    <property type="entry name" value="small_GTP"/>
    <property type="match status" value="1"/>
</dbReference>
<dbReference type="PANTHER" id="PTHR45759">
    <property type="entry name" value="NUCLEOLAR GTP-BINDING PROTEIN 1"/>
    <property type="match status" value="1"/>
</dbReference>
<dbReference type="Pfam" id="PF06858">
    <property type="entry name" value="NOG1"/>
    <property type="match status" value="1"/>
</dbReference>
<dbReference type="Pfam" id="PF17835">
    <property type="entry name" value="NOG1_N"/>
    <property type="match status" value="1"/>
</dbReference>
<dbReference type="Pfam" id="PF08155">
    <property type="entry name" value="NOGCT"/>
    <property type="match status" value="1"/>
</dbReference>
<dbReference type="PIRSF" id="PIRSF038919">
    <property type="entry name" value="NOG1"/>
    <property type="match status" value="1"/>
</dbReference>
<dbReference type="PRINTS" id="PR00326">
    <property type="entry name" value="GTP1OBG"/>
</dbReference>
<dbReference type="SUPFAM" id="SSF52540">
    <property type="entry name" value="P-loop containing nucleoside triphosphate hydrolases"/>
    <property type="match status" value="1"/>
</dbReference>
<dbReference type="PROSITE" id="PS51710">
    <property type="entry name" value="G_OBG"/>
    <property type="match status" value="1"/>
</dbReference>
<comment type="function">
    <text evidence="1 4 5 6">Involved in the biogenesis of the 60S ribosomal subunit (By similarity). Required for normal assembly of the mitotic spindle (PubMed:24255106). May be involved in both centrosome-dependent and centrosome-independent spindle assembly programs (PubMed:24255106). Acts as a TP53 repressor, preventing TP53 stabilization and cell cycle arrest (PubMed:20308539, PubMed:35413237).</text>
</comment>
<comment type="subcellular location">
    <subcellularLocation>
        <location evidence="5">Nucleus</location>
        <location evidence="5">Nucleolus</location>
    </subcellularLocation>
    <text evidence="5">Found in the nucleolus during interphase.</text>
</comment>
<comment type="similarity">
    <text evidence="2">Belongs to the TRAFAC class OBG-HflX-like GTPase superfamily. OBG GTPase family. NOG subfamily.</text>
</comment>
<organism>
    <name type="scientific">Drosophila melanogaster</name>
    <name type="common">Fruit fly</name>
    <dbReference type="NCBI Taxonomy" id="7227"/>
    <lineage>
        <taxon>Eukaryota</taxon>
        <taxon>Metazoa</taxon>
        <taxon>Ecdysozoa</taxon>
        <taxon>Arthropoda</taxon>
        <taxon>Hexapoda</taxon>
        <taxon>Insecta</taxon>
        <taxon>Pterygota</taxon>
        <taxon>Neoptera</taxon>
        <taxon>Endopterygota</taxon>
        <taxon>Diptera</taxon>
        <taxon>Brachycera</taxon>
        <taxon>Muscomorpha</taxon>
        <taxon>Ephydroidea</taxon>
        <taxon>Drosophilidae</taxon>
        <taxon>Drosophila</taxon>
        <taxon>Sophophora</taxon>
    </lineage>
</organism>
<name>NOG1_DROME</name>